<name>SPOT_MYCGE</name>
<proteinExistence type="inferred from homology"/>
<organism>
    <name type="scientific">Mycoplasma genitalium (strain ATCC 33530 / DSM 19775 / NCTC 10195 / G37)</name>
    <name type="common">Mycoplasmoides genitalium</name>
    <dbReference type="NCBI Taxonomy" id="243273"/>
    <lineage>
        <taxon>Bacteria</taxon>
        <taxon>Bacillati</taxon>
        <taxon>Mycoplasmatota</taxon>
        <taxon>Mycoplasmoidales</taxon>
        <taxon>Mycoplasmoidaceae</taxon>
        <taxon>Mycoplasmoides</taxon>
    </lineage>
</organism>
<feature type="chain" id="PRO_0000166572" description="Probable guanosine-3',5'-bis(diphosphate) 3'-pyrophosphohydrolase">
    <location>
        <begin position="1"/>
        <end position="720"/>
    </location>
</feature>
<feature type="domain" description="HD" evidence="2">
    <location>
        <begin position="49"/>
        <end position="154"/>
    </location>
</feature>
<feature type="sequence conflict" description="In Ref. 2; AAD10588." evidence="3" ref="2">
    <original>YDNEWD</original>
    <variation>LWQWVG</variation>
    <location>
        <begin position="219"/>
        <end position="224"/>
    </location>
</feature>
<comment type="function">
    <text evidence="1">In eubacteria ppGpp (guanosine 3'-diphosphate 5'-diphosphate) is a mediator of the stringent response that coordinates a variety of cellular activities in response to changes in nutritional abundance. This enzyme catalyzes the degradation of ppGpp into GDP. It may also be capable of catalyzing the synthesis of ppGpp (By similarity).</text>
</comment>
<comment type="catalytic activity">
    <reaction>
        <text>guanosine 3',5'-bis(diphosphate) + H2O = GDP + diphosphate + H(+)</text>
        <dbReference type="Rhea" id="RHEA:14253"/>
        <dbReference type="ChEBI" id="CHEBI:15377"/>
        <dbReference type="ChEBI" id="CHEBI:15378"/>
        <dbReference type="ChEBI" id="CHEBI:33019"/>
        <dbReference type="ChEBI" id="CHEBI:58189"/>
        <dbReference type="ChEBI" id="CHEBI:77828"/>
        <dbReference type="EC" id="3.1.7.2"/>
    </reaction>
</comment>
<comment type="cofactor">
    <cofactor evidence="1">
        <name>Mn(2+)</name>
        <dbReference type="ChEBI" id="CHEBI:29035"/>
    </cofactor>
</comment>
<comment type="pathway">
    <text>Purine metabolism; ppGpp biosynthesis; ppGpp from GDP: step 1/1.</text>
</comment>
<comment type="similarity">
    <text evidence="3">Belongs to the RelA/SpoT family.</text>
</comment>
<dbReference type="EC" id="3.1.7.2"/>
<dbReference type="EMBL" id="L43967">
    <property type="protein sequence ID" value="AAC71500.1"/>
    <property type="molecule type" value="Genomic_DNA"/>
</dbReference>
<dbReference type="EMBL" id="U01770">
    <property type="protein sequence ID" value="AAD10588.1"/>
    <property type="molecule type" value="Genomic_DNA"/>
</dbReference>
<dbReference type="PIR" id="G64230">
    <property type="entry name" value="G64230"/>
</dbReference>
<dbReference type="RefSeq" id="WP_009885909.1">
    <property type="nucleotide sequence ID" value="NC_000908.2"/>
</dbReference>
<dbReference type="SMR" id="P47520"/>
<dbReference type="FunCoup" id="P47520">
    <property type="interactions" value="194"/>
</dbReference>
<dbReference type="STRING" id="243273.MG_278"/>
<dbReference type="GeneID" id="88282434"/>
<dbReference type="KEGG" id="mge:MG_278"/>
<dbReference type="eggNOG" id="COG0317">
    <property type="taxonomic scope" value="Bacteria"/>
</dbReference>
<dbReference type="HOGENOM" id="CLU_012300_0_0_14"/>
<dbReference type="InParanoid" id="P47520"/>
<dbReference type="OrthoDB" id="9805041at2"/>
<dbReference type="BioCyc" id="MGEN243273:G1GJ2-336-MONOMER"/>
<dbReference type="UniPathway" id="UPA00908">
    <property type="reaction ID" value="UER00886"/>
</dbReference>
<dbReference type="Proteomes" id="UP000000807">
    <property type="component" value="Chromosome"/>
</dbReference>
<dbReference type="GO" id="GO:0008893">
    <property type="term" value="F:guanosine-3',5'-bis(diphosphate) 3'-diphosphatase activity"/>
    <property type="evidence" value="ECO:0007669"/>
    <property type="project" value="UniProtKB-EC"/>
</dbReference>
<dbReference type="GO" id="GO:0015970">
    <property type="term" value="P:guanosine tetraphosphate biosynthetic process"/>
    <property type="evidence" value="ECO:0007669"/>
    <property type="project" value="UniProtKB-UniPathway"/>
</dbReference>
<dbReference type="CDD" id="cd00077">
    <property type="entry name" value="HDc"/>
    <property type="match status" value="1"/>
</dbReference>
<dbReference type="CDD" id="cd05399">
    <property type="entry name" value="NT_Rel-Spo_like"/>
    <property type="match status" value="1"/>
</dbReference>
<dbReference type="FunFam" id="1.10.3210.10:FF:000001">
    <property type="entry name" value="GTP pyrophosphokinase RelA"/>
    <property type="match status" value="1"/>
</dbReference>
<dbReference type="Gene3D" id="3.30.460.10">
    <property type="entry name" value="Beta Polymerase, domain 2"/>
    <property type="match status" value="1"/>
</dbReference>
<dbReference type="Gene3D" id="1.10.3210.10">
    <property type="entry name" value="Hypothetical protein af1432"/>
    <property type="match status" value="1"/>
</dbReference>
<dbReference type="InterPro" id="IPR003607">
    <property type="entry name" value="HD/PDEase_dom"/>
</dbReference>
<dbReference type="InterPro" id="IPR006674">
    <property type="entry name" value="HD_domain"/>
</dbReference>
<dbReference type="InterPro" id="IPR043519">
    <property type="entry name" value="NT_sf"/>
</dbReference>
<dbReference type="InterPro" id="IPR004811">
    <property type="entry name" value="RelA/Spo_fam"/>
</dbReference>
<dbReference type="InterPro" id="IPR007685">
    <property type="entry name" value="RelA_SpoT"/>
</dbReference>
<dbReference type="NCBIfam" id="TIGR00691">
    <property type="entry name" value="spoT_relA"/>
    <property type="match status" value="1"/>
</dbReference>
<dbReference type="PANTHER" id="PTHR21262:SF31">
    <property type="entry name" value="GTP PYROPHOSPHOKINASE"/>
    <property type="match status" value="1"/>
</dbReference>
<dbReference type="PANTHER" id="PTHR21262">
    <property type="entry name" value="GUANOSINE-3',5'-BIS DIPHOSPHATE 3'-PYROPHOSPHOHYDROLASE"/>
    <property type="match status" value="1"/>
</dbReference>
<dbReference type="Pfam" id="PF13328">
    <property type="entry name" value="HD_4"/>
    <property type="match status" value="1"/>
</dbReference>
<dbReference type="Pfam" id="PF04607">
    <property type="entry name" value="RelA_SpoT"/>
    <property type="match status" value="1"/>
</dbReference>
<dbReference type="SMART" id="SM00471">
    <property type="entry name" value="HDc"/>
    <property type="match status" value="1"/>
</dbReference>
<dbReference type="SMART" id="SM00954">
    <property type="entry name" value="RelA_SpoT"/>
    <property type="match status" value="1"/>
</dbReference>
<dbReference type="SUPFAM" id="SSF109604">
    <property type="entry name" value="HD-domain/PDEase-like"/>
    <property type="match status" value="1"/>
</dbReference>
<dbReference type="SUPFAM" id="SSF81301">
    <property type="entry name" value="Nucleotidyltransferase"/>
    <property type="match status" value="1"/>
</dbReference>
<dbReference type="PROSITE" id="PS51831">
    <property type="entry name" value="HD"/>
    <property type="match status" value="1"/>
</dbReference>
<protein>
    <recommendedName>
        <fullName>Probable guanosine-3',5'-bis(diphosphate) 3'-pyrophosphohydrolase</fullName>
        <ecNumber>3.1.7.2</ecNumber>
    </recommendedName>
    <alternativeName>
        <fullName>Penta-phosphate guanosine-3'-pyrophosphohydrolase</fullName>
        <shortName>(ppGpp)ase</shortName>
    </alternativeName>
</protein>
<evidence type="ECO:0000250" key="1"/>
<evidence type="ECO:0000255" key="2">
    <source>
        <dbReference type="PROSITE-ProRule" id="PRU01175"/>
    </source>
</evidence>
<evidence type="ECO:0000305" key="3"/>
<sequence>MATIQEIECDFLAKIAQKFTNAEIELINKAFYHAKTWHENQKRLSGEPFFIHPLRTALSLVEWNMDPITICAGLLHDIIEDTDQTEANIAMIFSKEIAELVTKVTKITNESKKQRHLKNKKENLNLKSFVNIAINSQQEINVMVLKLADRLDNIASIEFLPIEKQKVIAKETLELYAKIAGRIGMYPVKTKLADLSFKVLDLKNYDNTLSKINKQKVFYDNEWDNFKQQLKKILAQNQIEYQLESRIKGIYSTYKKLTVHEQNISKIHDLFAIRLITKSELDCYHILGLIHLNFLIDSKYFKDYIASPKQNLYQSIHTTVRLKGLNVEIQIRTQQMDNVSKFGLASHWIYKEQKEGLLAPALQLNYLVTKQKHSHDFLKRIFGTDIIKINVSASHEPNVIKQINVDSNNKLLDIAFENYPKQFAKLTKIEIDGVEINSFDTSVENEMLIEFYFGKNNNLKSKWIRYMNNPIYREKVKKSLAKLAKSGRYSELAFYEKELGEKQLKLASETEIQKRLNTLRIKKMSDYLALIECTNFTNDEHLLFLAKNNDKWNKLTKPLKFAFSKVVFHNSYFEQIEGIFITKIVIEPCCSKIPDMPEQVTGILTKNILSVHRYGCKNLQNKKQLKIIPLYWNIQQLKLKPRKFRSYININGVWSEKTINKICQTIINGDGYIEKIIPKINKQKDEFDLNITLFVNNYQQLLTLMDQITTKNISFSWKYL</sequence>
<reference key="1">
    <citation type="journal article" date="1995" name="Science">
        <title>The minimal gene complement of Mycoplasma genitalium.</title>
        <authorList>
            <person name="Fraser C.M."/>
            <person name="Gocayne J.D."/>
            <person name="White O."/>
            <person name="Adams M.D."/>
            <person name="Clayton R.A."/>
            <person name="Fleischmann R.D."/>
            <person name="Bult C.J."/>
            <person name="Kerlavage A.R."/>
            <person name="Sutton G.G."/>
            <person name="Kelley J.M."/>
            <person name="Fritchman J.L."/>
            <person name="Weidman J.F."/>
            <person name="Small K.V."/>
            <person name="Sandusky M."/>
            <person name="Fuhrmann J.L."/>
            <person name="Nguyen D.T."/>
            <person name="Utterback T.R."/>
            <person name="Saudek D.M."/>
            <person name="Phillips C.A."/>
            <person name="Merrick J.M."/>
            <person name="Tomb J.-F."/>
            <person name="Dougherty B.A."/>
            <person name="Bott K.F."/>
            <person name="Hu P.-C."/>
            <person name="Lucier T.S."/>
            <person name="Peterson S.N."/>
            <person name="Smith H.O."/>
            <person name="Hutchison C.A. III"/>
            <person name="Venter J.C."/>
        </authorList>
    </citation>
    <scope>NUCLEOTIDE SEQUENCE [LARGE SCALE GENOMIC DNA]</scope>
    <source>
        <strain>ATCC 33530 / DSM 19775 / NCTC 10195 / G37</strain>
    </source>
</reference>
<reference key="2">
    <citation type="journal article" date="1993" name="J. Bacteriol.">
        <title>A survey of the Mycoplasma genitalium genome by using random sequencing.</title>
        <authorList>
            <person name="Peterson S.N."/>
            <person name="Hu P.-C."/>
            <person name="Bott K.F."/>
            <person name="Hutchison C.A. III"/>
        </authorList>
    </citation>
    <scope>NUCLEOTIDE SEQUENCE [GENOMIC DNA] OF 131-224</scope>
    <source>
        <strain>ATCC 33530 / DSM 19775 / NCTC 10195 / G37</strain>
    </source>
</reference>
<accession>P47520</accession>
<accession>Q49221</accession>
<gene>
    <name type="primary">spoT</name>
    <name type="ordered locus">MG278</name>
</gene>
<keyword id="KW-0378">Hydrolase</keyword>
<keyword id="KW-0464">Manganese</keyword>
<keyword id="KW-1185">Reference proteome</keyword>